<evidence type="ECO:0000250" key="1"/>
<evidence type="ECO:0000250" key="2">
    <source>
        <dbReference type="UniProtKB" id="O08648"/>
    </source>
</evidence>
<evidence type="ECO:0000255" key="3">
    <source>
        <dbReference type="PROSITE-ProRule" id="PRU00159"/>
    </source>
</evidence>
<evidence type="ECO:0000255" key="4">
    <source>
        <dbReference type="PROSITE-ProRule" id="PRU10027"/>
    </source>
</evidence>
<evidence type="ECO:0000256" key="5">
    <source>
        <dbReference type="SAM" id="MobiDB-lite"/>
    </source>
</evidence>
<evidence type="ECO:0000269" key="6">
    <source>
    </source>
</evidence>
<evidence type="ECO:0000269" key="7">
    <source>
    </source>
</evidence>
<evidence type="ECO:0000269" key="8">
    <source>
    </source>
</evidence>
<evidence type="ECO:0000269" key="9">
    <source>
    </source>
</evidence>
<evidence type="ECO:0000269" key="10">
    <source>
    </source>
</evidence>
<evidence type="ECO:0000269" key="11">
    <source>
    </source>
</evidence>
<evidence type="ECO:0000269" key="12">
    <source>
    </source>
</evidence>
<evidence type="ECO:0000303" key="13">
    <source>
    </source>
</evidence>
<evidence type="ECO:0000303" key="14">
    <source>
    </source>
</evidence>
<evidence type="ECO:0000305" key="15"/>
<evidence type="ECO:0007744" key="16">
    <source>
    </source>
</evidence>
<evidence type="ECO:0007744" key="17">
    <source>
    </source>
</evidence>
<evidence type="ECO:0007744" key="18">
    <source>
    </source>
</evidence>
<comment type="function">
    <text evidence="6 12">Component of a protein kinase signal transduction cascade. Activates the CSBP2, P38 and JNK MAPK pathways, but not the ERK pathway. Specifically phosphorylates and activates MAP2K4 and MAP2K6.</text>
</comment>
<comment type="catalytic activity">
    <reaction>
        <text>L-seryl-[protein] + ATP = O-phospho-L-seryl-[protein] + ADP + H(+)</text>
        <dbReference type="Rhea" id="RHEA:17989"/>
        <dbReference type="Rhea" id="RHEA-COMP:9863"/>
        <dbReference type="Rhea" id="RHEA-COMP:11604"/>
        <dbReference type="ChEBI" id="CHEBI:15378"/>
        <dbReference type="ChEBI" id="CHEBI:29999"/>
        <dbReference type="ChEBI" id="CHEBI:30616"/>
        <dbReference type="ChEBI" id="CHEBI:83421"/>
        <dbReference type="ChEBI" id="CHEBI:456216"/>
        <dbReference type="EC" id="2.7.11.25"/>
    </reaction>
</comment>
<comment type="catalytic activity">
    <reaction>
        <text>L-threonyl-[protein] + ATP = O-phospho-L-threonyl-[protein] + ADP + H(+)</text>
        <dbReference type="Rhea" id="RHEA:46608"/>
        <dbReference type="Rhea" id="RHEA-COMP:11060"/>
        <dbReference type="Rhea" id="RHEA-COMP:11605"/>
        <dbReference type="ChEBI" id="CHEBI:15378"/>
        <dbReference type="ChEBI" id="CHEBI:30013"/>
        <dbReference type="ChEBI" id="CHEBI:30616"/>
        <dbReference type="ChEBI" id="CHEBI:61977"/>
        <dbReference type="ChEBI" id="CHEBI:456216"/>
        <dbReference type="EC" id="2.7.11.25"/>
    </reaction>
</comment>
<comment type="cofactor">
    <cofactor>
        <name>Mg(2+)</name>
        <dbReference type="ChEBI" id="CHEBI:18420"/>
    </cofactor>
</comment>
<comment type="activity regulation">
    <text evidence="6">N-terminal autoinhibitory domain interacts with the C-terminal kinase domain, inhibiting kinase activity, and preventing interaction with its substrate, MAP2K6. The GADD45 proteins activate the kinase by binding to the N-terminal domain. Activated by phosphorylation on Thr-1505.</text>
</comment>
<comment type="subunit">
    <text evidence="2 6 7 9 11">Monomer and homodimer. Homodimerization enhances kinase activity. Interacts with TRAF4; this promotes homodimerization (PubMed:16157600). Binds both upstream activators and downstream substrates in multimolecular complexes. Interacts with AXIN1 and DIXDC1; interaction with DIXDC1 prevents interaction with AXIN1 (PubMed:15262978). Interacts with GADD45 and MAP2K6 (PubMed:12052864). Interacts with ZFP36; this interaction enhances the association with SH3KBP1/CIN85 (PubMed:20221403). Interacts with SH3KBP1; this interaction enhances the association with ZFP36 (PubMed:20221403). Interacts with CDC42 (By similarity).</text>
</comment>
<comment type="interaction">
    <interactant intactId="EBI-448104">
        <id>Q9Y6R4</id>
    </interactant>
    <interactant intactId="EBI-352089">
        <id>O75369</id>
        <label>FLNB</label>
    </interactant>
    <organismsDiffer>false</organismsDiffer>
    <experiments>2</experiments>
</comment>
<comment type="interaction">
    <interactant intactId="EBI-448104">
        <id>Q9Y6R4</id>
    </interactant>
    <interactant intactId="EBI-448187">
        <id>O75293</id>
        <label>GADD45B</label>
    </interactant>
    <organismsDiffer>false</organismsDiffer>
    <experiments>3</experiments>
</comment>
<comment type="interaction">
    <interactant intactId="EBI-448104">
        <id>Q9Y6R4</id>
    </interactant>
    <interactant intactId="EBI-448202">
        <id>O95257</id>
        <label>GADD45G</label>
    </interactant>
    <organismsDiffer>false</organismsDiffer>
    <experiments>3</experiments>
</comment>
<comment type="interaction">
    <interactant intactId="EBI-448104">
        <id>Q9Y6R4</id>
    </interactant>
    <interactant intactId="EBI-346595">
        <id>Q96B97</id>
        <label>SH3KBP1</label>
    </interactant>
    <organismsDiffer>false</organismsDiffer>
    <experiments>5</experiments>
</comment>
<comment type="interaction">
    <interactant intactId="EBI-448104">
        <id>Q9Y6R4</id>
    </interactant>
    <interactant intactId="EBI-3390054">
        <id>P0CG48</id>
        <label>UBC</label>
    </interactant>
    <organismsDiffer>false</organismsDiffer>
    <experiments>2</experiments>
</comment>
<comment type="subcellular location">
    <subcellularLocation>
        <location evidence="1">Cytoplasm</location>
        <location evidence="1">Perinuclear region</location>
    </subcellularLocation>
    <text evidence="1">Localized in perinuclear vesicular-like structures, probably Golgi-associated vesicles.</text>
</comment>
<comment type="alternative products">
    <event type="alternative splicing"/>
    <isoform>
        <id>Q9Y6R4-1</id>
        <name>1</name>
        <name>A</name>
        <sequence type="displayed"/>
    </isoform>
    <isoform>
        <id>Q9Y6R4-2</id>
        <name>2</name>
        <name>B</name>
        <sequence type="described" ref="VSP_004884"/>
    </isoform>
</comment>
<comment type="tissue specificity">
    <text evidence="12">Expressed at high levels in heart, placenta, skeletal muscle and pancreas, and at lower levels in other tissues.</text>
</comment>
<comment type="similarity">
    <text evidence="15">Belongs to the protein kinase superfamily. STE Ser/Thr protein kinase family. MAP kinase kinase kinase subfamily.</text>
</comment>
<comment type="sequence caution" evidence="15">
    <conflict type="erroneous initiation">
        <sequence resource="EMBL-CDS" id="BAA13204"/>
    </conflict>
    <text>Extended N-terminus.</text>
</comment>
<sequence>MREAAAALVPPPAFAVTPAAAMEEPPPPPPPPPPPPEPETESEPECCLAARQEGTLGDSACKSPESDLEDFSDETNTENLYGTSPPSTPRQMKRMSTKHQRNNVGRPASRSNLKEKMNAPNQPPHKDTGKTVENVEEYSYKQEKKIRAALRTTERDRKKNVQCSFMLDSVGGSLPKKSIPDVDLNKPYLSLGCSNAKLPVSVPMPIARPARQTSRTDCPADRLKFFETLRLLLKLTSVSKKKDREQRGQENTSGFWLNRSNELIWLELQAWHAGRTINDQDFFLYTARQAIPDIINEILTFKVDYGSFAFVRDRAGFNGTSVEGQCKATPGTKIVGYSTHHEHLQRQRVSFEQVKRIMELLEYIEALYPSLQALQKDYEKYAAKDFQDRVQALCLWLNITKDLNQKLRIMGTVLGIKNLSDIGWPVFEIPSPRPSKGNEPEYEGDDTEGELKELESSTDESEEEQISDPRVPEIRQPIDNSFDIQSRDCISKKLERLESEDDSLGWGAPDWSTEAGFSRHCLTSIYRPFVDKALKQMGLRKLILRLHKLMDGSLQRARIALVKNDRPVEFSEFPDPMWGSDYVQLSRTPPSSEEKCSAVSWEELKAMDLPSFEPAFLVLCRVLLNVIHECLKLRLEQRPAGEPSLLSIKQLVRECKEVLKGGLLMKQYYQFMLQEVLEDLEKPDCNIDAFEEDLHKMLMVYFDYMRSWIQMLQQLPQASHSLKNLLEEEWNFTKEITHYIRGGEAQAGKLFCDIAGMLLKSTGSFLEFGLQESCAEFWTSADDSSASDEIRRSVIEISRALKELFHEARERASKALGFAKMLRKDLEIAAEFRLSAPVRDLLDVLKSKQYVKVQIPGLENLQMFVPDTLAEEKSIILQLLNAAAGKDCSKDSDDVLIDAYLLLTKHGDRARDSEDSWGTWEAQPVKVVPQVETVDTLRSMQVDNLLLVVMQSAHLTIQRKAFQQSIEGLMTLCQEQTSSQPVIAKALQQLKNDALELCNRISNAIDRVDHMFTSEFDAEVDESESVTLQQYYREAMIQGYNFGFEYHKEVVRLMSGEFRQKIGDKYISFARKWMNYVLTKCESGRGTRPRWATQGFDFLQAIEPAFISALPEDDFLSLQALMNECIGHVIGKPHSPVTGLYLAIHRNSPRPMKVPRCHSDPPNPHLIIPTPEGFSTRSMPSDARSHGSPAAAAAAAAAAVAASRPSPSGGDSVLPKSISSAHDTRGSSVPENDRLASIAAELQFRSLSRHSSPTEERDEPAYPRGDSSGSTRRSWELRTLISQSKDTASKLGPIEAIQKSVRLFEEKRYREMRRKNIIGQVCDTPKSYDNVMHVGLRKVTFKWQRGNKIGEGQYGKVYTCISVDTGELMAMKEIRFQPNDHKTIKETADELKIFEGIKHPNLVRYFGVELHREEMYIFMEYCDEGTLEEVSRLGLQEHVIRLYSKQITIAINVLHEHGIVHRDIKGANIFLTSSGLIKLGDFGCSVKLKNNAQTMPGEVNSTLGTAAYMAPEVITRAKGEGHGRAADIWSLGCVVIEMVTGKRPWHEYEHNFQIMYKVGMGHKPPIPERLSPEGKDFLSHCLESDPKMRWTASQLLDHSFVKVCTDEE</sequence>
<protein>
    <recommendedName>
        <fullName>Mitogen-activated protein kinase kinase kinase 4</fullName>
        <ecNumber>2.7.11.25</ecNumber>
    </recommendedName>
    <alternativeName>
        <fullName>MAP three kinase 1</fullName>
    </alternativeName>
    <alternativeName>
        <fullName>MAPK/ERK kinase kinase 4</fullName>
        <shortName>MEK kinase 4</shortName>
        <shortName>MEKK 4</shortName>
    </alternativeName>
</protein>
<organism>
    <name type="scientific">Homo sapiens</name>
    <name type="common">Human</name>
    <dbReference type="NCBI Taxonomy" id="9606"/>
    <lineage>
        <taxon>Eukaryota</taxon>
        <taxon>Metazoa</taxon>
        <taxon>Chordata</taxon>
        <taxon>Craniata</taxon>
        <taxon>Vertebrata</taxon>
        <taxon>Euteleostomi</taxon>
        <taxon>Mammalia</taxon>
        <taxon>Eutheria</taxon>
        <taxon>Euarchontoglires</taxon>
        <taxon>Primates</taxon>
        <taxon>Haplorrhini</taxon>
        <taxon>Catarrhini</taxon>
        <taxon>Hominidae</taxon>
        <taxon>Homo</taxon>
    </lineage>
</organism>
<keyword id="KW-0025">Alternative splicing</keyword>
<keyword id="KW-0067">ATP-binding</keyword>
<keyword id="KW-0963">Cytoplasm</keyword>
<keyword id="KW-0418">Kinase</keyword>
<keyword id="KW-0460">Magnesium</keyword>
<keyword id="KW-0479">Metal-binding</keyword>
<keyword id="KW-0547">Nucleotide-binding</keyword>
<keyword id="KW-0597">Phosphoprotein</keyword>
<keyword id="KW-1267">Proteomics identification</keyword>
<keyword id="KW-1185">Reference proteome</keyword>
<keyword id="KW-0723">Serine/threonine-protein kinase</keyword>
<keyword id="KW-0808">Transferase</keyword>
<dbReference type="EC" id="2.7.11.25"/>
<dbReference type="EMBL" id="AF002715">
    <property type="protein sequence ID" value="AAB68804.1"/>
    <property type="molecule type" value="mRNA"/>
</dbReference>
<dbReference type="EMBL" id="D86968">
    <property type="protein sequence ID" value="BAA13204.2"/>
    <property type="status" value="ALT_INIT"/>
    <property type="molecule type" value="mRNA"/>
</dbReference>
<dbReference type="EMBL" id="AL109942">
    <property type="status" value="NOT_ANNOTATED_CDS"/>
    <property type="molecule type" value="Genomic_DNA"/>
</dbReference>
<dbReference type="EMBL" id="AL139393">
    <property type="status" value="NOT_ANNOTATED_CDS"/>
    <property type="molecule type" value="Genomic_DNA"/>
</dbReference>
<dbReference type="EMBL" id="AL591045">
    <property type="status" value="NOT_ANNOTATED_CDS"/>
    <property type="molecule type" value="Genomic_DNA"/>
</dbReference>
<dbReference type="EMBL" id="AL596452">
    <property type="status" value="NOT_ANNOTATED_CDS"/>
    <property type="molecule type" value="Genomic_DNA"/>
</dbReference>
<dbReference type="EMBL" id="CH471051">
    <property type="protein sequence ID" value="EAW47587.1"/>
    <property type="molecule type" value="Genomic_DNA"/>
</dbReference>
<dbReference type="EMBL" id="BC136276">
    <property type="protein sequence ID" value="AAI36277.1"/>
    <property type="molecule type" value="mRNA"/>
</dbReference>
<dbReference type="EMBL" id="BC143735">
    <property type="protein sequence ID" value="AAI43736.1"/>
    <property type="molecule type" value="mRNA"/>
</dbReference>
<dbReference type="EMBL" id="BC146770">
    <property type="protein sequence ID" value="AAI46771.1"/>
    <property type="molecule type" value="mRNA"/>
</dbReference>
<dbReference type="CCDS" id="CCDS34565.1">
    <molecule id="Q9Y6R4-1"/>
</dbReference>
<dbReference type="CCDS" id="CCDS34566.1">
    <molecule id="Q9Y6R4-2"/>
</dbReference>
<dbReference type="PIR" id="T03022">
    <property type="entry name" value="T03022"/>
</dbReference>
<dbReference type="RefSeq" id="NP_001278887.1">
    <property type="nucleotide sequence ID" value="NM_001291958.1"/>
</dbReference>
<dbReference type="RefSeq" id="NP_001288001.1">
    <property type="nucleotide sequence ID" value="NM_001301072.1"/>
</dbReference>
<dbReference type="RefSeq" id="NP_005913.3">
    <molecule id="Q9Y6R4-1"/>
    <property type="nucleotide sequence ID" value="NM_005922.4"/>
</dbReference>
<dbReference type="RefSeq" id="NP_006715.3">
    <molecule id="Q9Y6R4-2"/>
    <property type="nucleotide sequence ID" value="NM_006724.4"/>
</dbReference>
<dbReference type="SMR" id="Q9Y6R4"/>
<dbReference type="BioGRID" id="110380">
    <property type="interactions" value="82"/>
</dbReference>
<dbReference type="CORUM" id="Q9Y6R4"/>
<dbReference type="FunCoup" id="Q9Y6R4">
    <property type="interactions" value="3188"/>
</dbReference>
<dbReference type="IntAct" id="Q9Y6R4">
    <property type="interactions" value="30"/>
</dbReference>
<dbReference type="MINT" id="Q9Y6R4"/>
<dbReference type="STRING" id="9606.ENSP00000375986"/>
<dbReference type="BindingDB" id="Q9Y6R4"/>
<dbReference type="ChEMBL" id="CHEMBL4853"/>
<dbReference type="DrugBank" id="DB12010">
    <property type="generic name" value="Fostamatinib"/>
</dbReference>
<dbReference type="DrugCentral" id="Q9Y6R4"/>
<dbReference type="CarbonylDB" id="Q9Y6R4"/>
<dbReference type="GlyCosmos" id="Q9Y6R4">
    <property type="glycosylation" value="2 sites, 1 glycan"/>
</dbReference>
<dbReference type="GlyGen" id="Q9Y6R4">
    <property type="glycosylation" value="6 sites, 1 O-linked glycan (5 sites)"/>
</dbReference>
<dbReference type="iPTMnet" id="Q9Y6R4"/>
<dbReference type="PhosphoSitePlus" id="Q9Y6R4"/>
<dbReference type="BioMuta" id="MAP3K4"/>
<dbReference type="DMDM" id="296434576"/>
<dbReference type="CPTAC" id="CPTAC-847"/>
<dbReference type="CPTAC" id="CPTAC-848"/>
<dbReference type="jPOST" id="Q9Y6R4"/>
<dbReference type="MassIVE" id="Q9Y6R4"/>
<dbReference type="PaxDb" id="9606-ENSP00000375986"/>
<dbReference type="PeptideAtlas" id="Q9Y6R4"/>
<dbReference type="ProteomicsDB" id="86777">
    <molecule id="Q9Y6R4-1"/>
</dbReference>
<dbReference type="ProteomicsDB" id="86778">
    <molecule id="Q9Y6R4-2"/>
</dbReference>
<dbReference type="Pumba" id="Q9Y6R4"/>
<dbReference type="Antibodypedia" id="2064">
    <property type="antibodies" value="341 antibodies from 36 providers"/>
</dbReference>
<dbReference type="DNASU" id="4216"/>
<dbReference type="Ensembl" id="ENST00000366919.6">
    <molecule id="Q9Y6R4-2"/>
    <property type="protein sequence ID" value="ENSP00000355886.2"/>
    <property type="gene ID" value="ENSG00000085511.20"/>
</dbReference>
<dbReference type="Ensembl" id="ENST00000392142.9">
    <molecule id="Q9Y6R4-1"/>
    <property type="protein sequence ID" value="ENSP00000375986.4"/>
    <property type="gene ID" value="ENSG00000085511.20"/>
</dbReference>
<dbReference type="GeneID" id="4216"/>
<dbReference type="KEGG" id="hsa:4216"/>
<dbReference type="MANE-Select" id="ENST00000392142.9">
    <property type="protein sequence ID" value="ENSP00000375986.4"/>
    <property type="RefSeq nucleotide sequence ID" value="NM_005922.4"/>
    <property type="RefSeq protein sequence ID" value="NP_005913.3"/>
</dbReference>
<dbReference type="UCSC" id="uc003qtn.4">
    <molecule id="Q9Y6R4-1"/>
    <property type="organism name" value="human"/>
</dbReference>
<dbReference type="AGR" id="HGNC:6856"/>
<dbReference type="CTD" id="4216"/>
<dbReference type="DisGeNET" id="4216"/>
<dbReference type="GeneCards" id="MAP3K4"/>
<dbReference type="HGNC" id="HGNC:6856">
    <property type="gene designation" value="MAP3K4"/>
</dbReference>
<dbReference type="HPA" id="ENSG00000085511">
    <property type="expression patterns" value="Low tissue specificity"/>
</dbReference>
<dbReference type="MIM" id="602425">
    <property type="type" value="gene"/>
</dbReference>
<dbReference type="neXtProt" id="NX_Q9Y6R4"/>
<dbReference type="OpenTargets" id="ENSG00000085511"/>
<dbReference type="PharmGKB" id="PA30600"/>
<dbReference type="VEuPathDB" id="HostDB:ENSG00000085511"/>
<dbReference type="eggNOG" id="KOG4645">
    <property type="taxonomic scope" value="Eukaryota"/>
</dbReference>
<dbReference type="GeneTree" id="ENSGT00880000138034"/>
<dbReference type="InParanoid" id="Q9Y6R4"/>
<dbReference type="OMA" id="DEHQFEE"/>
<dbReference type="OrthoDB" id="1043025at2759"/>
<dbReference type="PAN-GO" id="Q9Y6R4">
    <property type="GO annotations" value="4 GO annotations based on evolutionary models"/>
</dbReference>
<dbReference type="PhylomeDB" id="Q9Y6R4"/>
<dbReference type="TreeFam" id="TF105114"/>
<dbReference type="BRENDA" id="2.7.12.2">
    <property type="organism ID" value="2681"/>
</dbReference>
<dbReference type="PathwayCommons" id="Q9Y6R4"/>
<dbReference type="SignaLink" id="Q9Y6R4"/>
<dbReference type="SIGNOR" id="Q9Y6R4"/>
<dbReference type="BioGRID-ORCS" id="4216">
    <property type="hits" value="20 hits in 1208 CRISPR screens"/>
</dbReference>
<dbReference type="ChiTaRS" id="MAP3K4">
    <property type="organism name" value="human"/>
</dbReference>
<dbReference type="GeneWiki" id="MAP3K4"/>
<dbReference type="GenomeRNAi" id="4216"/>
<dbReference type="Pharos" id="Q9Y6R4">
    <property type="development level" value="Tbio"/>
</dbReference>
<dbReference type="PRO" id="PR:Q9Y6R4"/>
<dbReference type="Proteomes" id="UP000005640">
    <property type="component" value="Chromosome 6"/>
</dbReference>
<dbReference type="RNAct" id="Q9Y6R4">
    <property type="molecule type" value="protein"/>
</dbReference>
<dbReference type="Bgee" id="ENSG00000085511">
    <property type="expression patterns" value="Expressed in middle temporal gyrus and 209 other cell types or tissues"/>
</dbReference>
<dbReference type="ExpressionAtlas" id="Q9Y6R4">
    <property type="expression patterns" value="baseline and differential"/>
</dbReference>
<dbReference type="GO" id="GO:0005737">
    <property type="term" value="C:cytoplasm"/>
    <property type="evidence" value="ECO:0000314"/>
    <property type="project" value="UniProtKB"/>
</dbReference>
<dbReference type="GO" id="GO:0048471">
    <property type="term" value="C:perinuclear region of cytoplasm"/>
    <property type="evidence" value="ECO:0007669"/>
    <property type="project" value="UniProtKB-SubCell"/>
</dbReference>
<dbReference type="GO" id="GO:0005524">
    <property type="term" value="F:ATP binding"/>
    <property type="evidence" value="ECO:0007669"/>
    <property type="project" value="UniProtKB-KW"/>
</dbReference>
<dbReference type="GO" id="GO:0004709">
    <property type="term" value="F:MAP kinase kinase kinase activity"/>
    <property type="evidence" value="ECO:0000314"/>
    <property type="project" value="UniProtKB"/>
</dbReference>
<dbReference type="GO" id="GO:0046872">
    <property type="term" value="F:metal ion binding"/>
    <property type="evidence" value="ECO:0007669"/>
    <property type="project" value="UniProtKB-KW"/>
</dbReference>
<dbReference type="GO" id="GO:0106310">
    <property type="term" value="F:protein serine kinase activity"/>
    <property type="evidence" value="ECO:0007669"/>
    <property type="project" value="RHEA"/>
</dbReference>
<dbReference type="GO" id="GO:0060718">
    <property type="term" value="P:chorionic trophoblast cell differentiation"/>
    <property type="evidence" value="ECO:0007669"/>
    <property type="project" value="Ensembl"/>
</dbReference>
<dbReference type="GO" id="GO:0035556">
    <property type="term" value="P:intracellular signal transduction"/>
    <property type="evidence" value="ECO:0000250"/>
    <property type="project" value="UniProtKB"/>
</dbReference>
<dbReference type="GO" id="GO:0019100">
    <property type="term" value="P:male germ-line sex determination"/>
    <property type="evidence" value="ECO:0007669"/>
    <property type="project" value="Ensembl"/>
</dbReference>
<dbReference type="GO" id="GO:0000165">
    <property type="term" value="P:MAPK cascade"/>
    <property type="evidence" value="ECO:0000314"/>
    <property type="project" value="UniProtKB"/>
</dbReference>
<dbReference type="GO" id="GO:0038066">
    <property type="term" value="P:p38MAPK cascade"/>
    <property type="evidence" value="ECO:0000318"/>
    <property type="project" value="GO_Central"/>
</dbReference>
<dbReference type="GO" id="GO:0001890">
    <property type="term" value="P:placenta development"/>
    <property type="evidence" value="ECO:0007669"/>
    <property type="project" value="Ensembl"/>
</dbReference>
<dbReference type="GO" id="GO:0043507">
    <property type="term" value="P:positive regulation of JUN kinase activity"/>
    <property type="evidence" value="ECO:0000314"/>
    <property type="project" value="UniProtKB"/>
</dbReference>
<dbReference type="GO" id="GO:1900745">
    <property type="term" value="P:positive regulation of p38MAPK cascade"/>
    <property type="evidence" value="ECO:0000314"/>
    <property type="project" value="UniProtKB"/>
</dbReference>
<dbReference type="GO" id="GO:0032206">
    <property type="term" value="P:positive regulation of telomere maintenance"/>
    <property type="evidence" value="ECO:0000315"/>
    <property type="project" value="BHF-UCL"/>
</dbReference>
<dbReference type="GO" id="GO:0010468">
    <property type="term" value="P:regulation of gene expression"/>
    <property type="evidence" value="ECO:0007669"/>
    <property type="project" value="Ensembl"/>
</dbReference>
<dbReference type="GO" id="GO:0010225">
    <property type="term" value="P:response to UV-C"/>
    <property type="evidence" value="ECO:0000315"/>
    <property type="project" value="UniProtKB"/>
</dbReference>
<dbReference type="CDD" id="cd06626">
    <property type="entry name" value="STKc_MEKK4"/>
    <property type="match status" value="1"/>
</dbReference>
<dbReference type="FunFam" id="1.10.510.10:FF:000122">
    <property type="entry name" value="Mitogen-activated protein kinase kinase kinase 4"/>
    <property type="match status" value="1"/>
</dbReference>
<dbReference type="Gene3D" id="1.10.510.10">
    <property type="entry name" value="Transferase(Phosphotransferase) domain 1"/>
    <property type="match status" value="1"/>
</dbReference>
<dbReference type="InterPro" id="IPR011009">
    <property type="entry name" value="Kinase-like_dom_sf"/>
</dbReference>
<dbReference type="InterPro" id="IPR050538">
    <property type="entry name" value="MAP_kinase_kinase_kinase"/>
</dbReference>
<dbReference type="InterPro" id="IPR045801">
    <property type="entry name" value="MEKK4_N"/>
</dbReference>
<dbReference type="InterPro" id="IPR000719">
    <property type="entry name" value="Prot_kinase_dom"/>
</dbReference>
<dbReference type="InterPro" id="IPR017441">
    <property type="entry name" value="Protein_kinase_ATP_BS"/>
</dbReference>
<dbReference type="InterPro" id="IPR008271">
    <property type="entry name" value="Ser/Thr_kinase_AS"/>
</dbReference>
<dbReference type="PANTHER" id="PTHR48016">
    <property type="entry name" value="MAP KINASE KINASE KINASE SSK2-RELATED-RELATED"/>
    <property type="match status" value="1"/>
</dbReference>
<dbReference type="PANTHER" id="PTHR48016:SF32">
    <property type="entry name" value="MITOGEN-ACTIVATED PROTEIN KINASE KINASE KINASE 4"/>
    <property type="match status" value="1"/>
</dbReference>
<dbReference type="Pfam" id="PF19431">
    <property type="entry name" value="MEKK4_N"/>
    <property type="match status" value="1"/>
</dbReference>
<dbReference type="Pfam" id="PF00069">
    <property type="entry name" value="Pkinase"/>
    <property type="match status" value="1"/>
</dbReference>
<dbReference type="SMART" id="SM00220">
    <property type="entry name" value="S_TKc"/>
    <property type="match status" value="1"/>
</dbReference>
<dbReference type="SUPFAM" id="SSF101447">
    <property type="entry name" value="Formin homology 2 domain (FH2 domain)"/>
    <property type="match status" value="1"/>
</dbReference>
<dbReference type="SUPFAM" id="SSF56112">
    <property type="entry name" value="Protein kinase-like (PK-like)"/>
    <property type="match status" value="1"/>
</dbReference>
<dbReference type="PROSITE" id="PS00107">
    <property type="entry name" value="PROTEIN_KINASE_ATP"/>
    <property type="match status" value="1"/>
</dbReference>
<dbReference type="PROSITE" id="PS50011">
    <property type="entry name" value="PROTEIN_KINASE_DOM"/>
    <property type="match status" value="1"/>
</dbReference>
<dbReference type="PROSITE" id="PS00108">
    <property type="entry name" value="PROTEIN_KINASE_ST"/>
    <property type="match status" value="1"/>
</dbReference>
<name>M3K4_HUMAN</name>
<feature type="chain" id="PRO_0000086247" description="Mitogen-activated protein kinase kinase kinase 4">
    <location>
        <begin position="1"/>
        <end position="1608"/>
    </location>
</feature>
<feature type="domain" description="Protein kinase" evidence="3">
    <location>
        <begin position="1343"/>
        <end position="1601"/>
    </location>
</feature>
<feature type="region of interest" description="Disordered" evidence="5">
    <location>
        <begin position="1"/>
        <end position="136"/>
    </location>
</feature>
<feature type="region of interest" description="Disordered" evidence="5">
    <location>
        <begin position="429"/>
        <end position="478"/>
    </location>
</feature>
<feature type="region of interest" description="Disordered" evidence="5">
    <location>
        <begin position="1157"/>
        <end position="1190"/>
    </location>
</feature>
<feature type="region of interest" description="Disordered" evidence="5">
    <location>
        <begin position="1202"/>
        <end position="1231"/>
    </location>
</feature>
<feature type="region of interest" description="Disordered" evidence="5">
    <location>
        <begin position="1244"/>
        <end position="1274"/>
    </location>
</feature>
<feature type="compositionally biased region" description="Low complexity" evidence="5">
    <location>
        <begin position="1"/>
        <end position="23"/>
    </location>
</feature>
<feature type="compositionally biased region" description="Pro residues" evidence="5">
    <location>
        <begin position="24"/>
        <end position="37"/>
    </location>
</feature>
<feature type="compositionally biased region" description="Acidic residues" evidence="5">
    <location>
        <begin position="66"/>
        <end position="76"/>
    </location>
</feature>
<feature type="compositionally biased region" description="Basic residues" evidence="5">
    <location>
        <begin position="91"/>
        <end position="101"/>
    </location>
</feature>
<feature type="compositionally biased region" description="Acidic residues" evidence="5">
    <location>
        <begin position="456"/>
        <end position="466"/>
    </location>
</feature>
<feature type="compositionally biased region" description="Polar residues" evidence="5">
    <location>
        <begin position="1217"/>
        <end position="1230"/>
    </location>
</feature>
<feature type="compositionally biased region" description="Basic and acidic residues" evidence="5">
    <location>
        <begin position="1252"/>
        <end position="1261"/>
    </location>
</feature>
<feature type="active site" description="Proton acceptor" evidence="3 4">
    <location>
        <position position="1463"/>
    </location>
</feature>
<feature type="binding site" evidence="3">
    <location>
        <begin position="1349"/>
        <end position="1357"/>
    </location>
    <ligand>
        <name>ATP</name>
        <dbReference type="ChEBI" id="CHEBI:30616"/>
    </ligand>
</feature>
<feature type="binding site" evidence="3">
    <location>
        <position position="1372"/>
    </location>
    <ligand>
        <name>ATP</name>
        <dbReference type="ChEBI" id="CHEBI:30616"/>
    </ligand>
</feature>
<feature type="modified residue" description="Phosphoserine" evidence="2">
    <location>
        <position position="84"/>
    </location>
</feature>
<feature type="modified residue" description="Phosphoserine" evidence="18">
    <location>
        <position position="431"/>
    </location>
</feature>
<feature type="modified residue" description="Phosphothreonine" evidence="18">
    <location>
        <position position="447"/>
    </location>
</feature>
<feature type="modified residue" description="Phosphoserine" evidence="17">
    <location>
        <position position="456"/>
    </location>
</feature>
<feature type="modified residue" description="Phosphoserine" evidence="17">
    <location>
        <position position="457"/>
    </location>
</feature>
<feature type="modified residue" description="Phosphothreonine" evidence="17">
    <location>
        <position position="458"/>
    </location>
</feature>
<feature type="modified residue" description="Phosphoserine" evidence="17">
    <location>
        <position position="461"/>
    </location>
</feature>
<feature type="modified residue" description="Phosphoserine" evidence="18">
    <location>
        <position position="481"/>
    </location>
</feature>
<feature type="modified residue" description="Phosphoserine" evidence="16 18">
    <location>
        <position position="499"/>
    </location>
</feature>
<feature type="modified residue" description="Phosphoserine" evidence="18">
    <location>
        <position position="1252"/>
    </location>
</feature>
<feature type="modified residue" description="Phosphoserine" evidence="18">
    <location>
        <position position="1274"/>
    </location>
</feature>
<feature type="splice variant" id="VSP_004884" description="In isoform 2." evidence="13 14">
    <location>
        <begin position="1175"/>
        <end position="1224"/>
    </location>
</feature>
<feature type="sequence variant" id="VAR_059767" description="In dbSNP:rs4559074." evidence="8">
    <original>R</original>
    <variation>H</variation>
    <location>
        <position position="157"/>
    </location>
</feature>
<feature type="sequence variant" id="VAR_040686" description="In dbSNP:rs35842248." evidence="10">
    <original>I</original>
    <variation>T</variation>
    <location>
        <position position="294"/>
    </location>
</feature>
<feature type="sequence variant" id="VAR_040687" description="In dbSNP:rs35730939." evidence="10">
    <original>V</original>
    <variation>I</variation>
    <location>
        <position position="335"/>
    </location>
</feature>
<feature type="sequence variant" id="VAR_040688" description="In dbSNP:rs55765351." evidence="10">
    <original>R</original>
    <variation>H</variation>
    <location>
        <position position="566"/>
    </location>
</feature>
<feature type="sequence variant" id="VAR_040689" description="In dbSNP:rs34018542." evidence="10">
    <original>Q</original>
    <variation>H</variation>
    <location>
        <position position="584"/>
    </location>
</feature>
<feature type="sequence variant" id="VAR_040690" description="In dbSNP:rs35533223." evidence="10">
    <original>H</original>
    <variation>P</variation>
    <location>
        <position position="906"/>
    </location>
</feature>
<feature type="sequence variant" id="VAR_040691" description="In an ovarian serous carcinoma sample; somatic mutation." evidence="10">
    <original>E</original>
    <variation>Q</variation>
    <location>
        <position position="1413"/>
    </location>
</feature>
<feature type="sequence variant" id="VAR_040692" description="In dbSNP:rs41267837." evidence="10">
    <original>A</original>
    <variation>V</variation>
    <location>
        <position position="1492"/>
    </location>
</feature>
<feature type="mutagenesis site" description="Loss of activity." evidence="6 12">
    <original>K</original>
    <variation>R</variation>
    <location>
        <position position="1372"/>
    </location>
</feature>
<feature type="sequence conflict" description="In Ref. 6; AAI36277." evidence="15" ref="6">
    <original>P</original>
    <variation>PP</variation>
    <location>
        <position position="35"/>
    </location>
</feature>
<feature type="sequence conflict" description="In Ref. 6; AAI46771." evidence="15" ref="6">
    <original>E</original>
    <variation>D</variation>
    <location>
        <position position="500"/>
    </location>
</feature>
<feature type="sequence conflict" description="In Ref. 1; AAB68804." evidence="15" ref="1">
    <original>R</original>
    <variation>I</variation>
    <location>
        <position position="791"/>
    </location>
</feature>
<feature type="sequence conflict" description="In Ref. 5; EAW47587 and 6; AAI43736/AAI36277." evidence="15" ref="5 6">
    <location>
        <position position="1190"/>
    </location>
</feature>
<feature type="sequence conflict" description="In Ref. 1; AAB68804." evidence="15" ref="1">
    <location>
        <position position="1199"/>
    </location>
</feature>
<accession>Q9Y6R4</accession>
<accession>A6H8W0</accession>
<accession>B7ZLD3</accession>
<accession>B9EG75</accession>
<accession>Q5VTT8</accession>
<accession>Q5VTT9</accession>
<accession>Q92612</accession>
<accession>Q9H408</accession>
<gene>
    <name type="primary">MAP3K4</name>
    <name type="synonym">KIAA0213</name>
    <name type="synonym">MAPKKK4</name>
    <name type="synonym">MEKK4</name>
    <name type="synonym">MTK1</name>
</gene>
<proteinExistence type="evidence at protein level"/>
<reference key="1">
    <citation type="journal article" date="1997" name="EMBO J.">
        <title>A human homolog of the yeast Ssk2/Ssk22 MAP kinase kinase kinases, MTK1, mediates stress-induced activation of the p38 and JNK pathways.</title>
        <authorList>
            <person name="Takekawa M."/>
            <person name="Posas F."/>
            <person name="Saito H."/>
        </authorList>
    </citation>
    <scope>NUCLEOTIDE SEQUENCE [MRNA] (ISOFORM 1)</scope>
    <scope>FUNCTION</scope>
    <scope>TISSUE SPECIFICITY</scope>
    <scope>ALTERNATIVE SPLICING</scope>
    <scope>MUTAGENESIS OF LYS-1372</scope>
    <source>
        <tissue>Fetal liver</tissue>
        <tissue>Skeletal muscle</tissue>
    </source>
</reference>
<reference key="2">
    <citation type="journal article" date="1996" name="DNA Res.">
        <title>Prediction of the coding sequences of unidentified human genes. VI. The coding sequences of 80 new genes (KIAA0201-KIAA0280) deduced by analysis of cDNA clones from cell line KG-1 and brain.</title>
        <authorList>
            <person name="Nagase T."/>
            <person name="Seki N."/>
            <person name="Ishikawa K."/>
            <person name="Ohira M."/>
            <person name="Kawarabayasi Y."/>
            <person name="Ohara O."/>
            <person name="Tanaka A."/>
            <person name="Kotani H."/>
            <person name="Miyajima N."/>
            <person name="Nomura N."/>
        </authorList>
    </citation>
    <scope>NUCLEOTIDE SEQUENCE [LARGE SCALE MRNA] (ISOFORM 2)</scope>
    <source>
        <tissue>Bone marrow</tissue>
    </source>
</reference>
<reference key="3">
    <citation type="submission" date="2003-01" db="EMBL/GenBank/DDBJ databases">
        <authorList>
            <person name="Ohara O."/>
            <person name="Nagase T."/>
            <person name="Kikuno R."/>
            <person name="Nomura N."/>
        </authorList>
    </citation>
    <scope>SEQUENCE REVISION</scope>
</reference>
<reference key="4">
    <citation type="journal article" date="2003" name="Nature">
        <title>The DNA sequence and analysis of human chromosome 6.</title>
        <authorList>
            <person name="Mungall A.J."/>
            <person name="Palmer S.A."/>
            <person name="Sims S.K."/>
            <person name="Edwards C.A."/>
            <person name="Ashurst J.L."/>
            <person name="Wilming L."/>
            <person name="Jones M.C."/>
            <person name="Horton R."/>
            <person name="Hunt S.E."/>
            <person name="Scott C.E."/>
            <person name="Gilbert J.G.R."/>
            <person name="Clamp M.E."/>
            <person name="Bethel G."/>
            <person name="Milne S."/>
            <person name="Ainscough R."/>
            <person name="Almeida J.P."/>
            <person name="Ambrose K.D."/>
            <person name="Andrews T.D."/>
            <person name="Ashwell R.I.S."/>
            <person name="Babbage A.K."/>
            <person name="Bagguley C.L."/>
            <person name="Bailey J."/>
            <person name="Banerjee R."/>
            <person name="Barker D.J."/>
            <person name="Barlow K.F."/>
            <person name="Bates K."/>
            <person name="Beare D.M."/>
            <person name="Beasley H."/>
            <person name="Beasley O."/>
            <person name="Bird C.P."/>
            <person name="Blakey S.E."/>
            <person name="Bray-Allen S."/>
            <person name="Brook J."/>
            <person name="Brown A.J."/>
            <person name="Brown J.Y."/>
            <person name="Burford D.C."/>
            <person name="Burrill W."/>
            <person name="Burton J."/>
            <person name="Carder C."/>
            <person name="Carter N.P."/>
            <person name="Chapman J.C."/>
            <person name="Clark S.Y."/>
            <person name="Clark G."/>
            <person name="Clee C.M."/>
            <person name="Clegg S."/>
            <person name="Cobley V."/>
            <person name="Collier R.E."/>
            <person name="Collins J.E."/>
            <person name="Colman L.K."/>
            <person name="Corby N.R."/>
            <person name="Coville G.J."/>
            <person name="Culley K.M."/>
            <person name="Dhami P."/>
            <person name="Davies J."/>
            <person name="Dunn M."/>
            <person name="Earthrowl M.E."/>
            <person name="Ellington A.E."/>
            <person name="Evans K.A."/>
            <person name="Faulkner L."/>
            <person name="Francis M.D."/>
            <person name="Frankish A."/>
            <person name="Frankland J."/>
            <person name="French L."/>
            <person name="Garner P."/>
            <person name="Garnett J."/>
            <person name="Ghori M.J."/>
            <person name="Gilby L.M."/>
            <person name="Gillson C.J."/>
            <person name="Glithero R.J."/>
            <person name="Grafham D.V."/>
            <person name="Grant M."/>
            <person name="Gribble S."/>
            <person name="Griffiths C."/>
            <person name="Griffiths M.N.D."/>
            <person name="Hall R."/>
            <person name="Halls K.S."/>
            <person name="Hammond S."/>
            <person name="Harley J.L."/>
            <person name="Hart E.A."/>
            <person name="Heath P.D."/>
            <person name="Heathcott R."/>
            <person name="Holmes S.J."/>
            <person name="Howden P.J."/>
            <person name="Howe K.L."/>
            <person name="Howell G.R."/>
            <person name="Huckle E."/>
            <person name="Humphray S.J."/>
            <person name="Humphries M.D."/>
            <person name="Hunt A.R."/>
            <person name="Johnson C.M."/>
            <person name="Joy A.A."/>
            <person name="Kay M."/>
            <person name="Keenan S.J."/>
            <person name="Kimberley A.M."/>
            <person name="King A."/>
            <person name="Laird G.K."/>
            <person name="Langford C."/>
            <person name="Lawlor S."/>
            <person name="Leongamornlert D.A."/>
            <person name="Leversha M."/>
            <person name="Lloyd C.R."/>
            <person name="Lloyd D.M."/>
            <person name="Loveland J.E."/>
            <person name="Lovell J."/>
            <person name="Martin S."/>
            <person name="Mashreghi-Mohammadi M."/>
            <person name="Maslen G.L."/>
            <person name="Matthews L."/>
            <person name="McCann O.T."/>
            <person name="McLaren S.J."/>
            <person name="McLay K."/>
            <person name="McMurray A."/>
            <person name="Moore M.J.F."/>
            <person name="Mullikin J.C."/>
            <person name="Niblett D."/>
            <person name="Nickerson T."/>
            <person name="Novik K.L."/>
            <person name="Oliver K."/>
            <person name="Overton-Larty E.K."/>
            <person name="Parker A."/>
            <person name="Patel R."/>
            <person name="Pearce A.V."/>
            <person name="Peck A.I."/>
            <person name="Phillimore B.J.C.T."/>
            <person name="Phillips S."/>
            <person name="Plumb R.W."/>
            <person name="Porter K.M."/>
            <person name="Ramsey Y."/>
            <person name="Ranby S.A."/>
            <person name="Rice C.M."/>
            <person name="Ross M.T."/>
            <person name="Searle S.M."/>
            <person name="Sehra H.K."/>
            <person name="Sheridan E."/>
            <person name="Skuce C.D."/>
            <person name="Smith S."/>
            <person name="Smith M."/>
            <person name="Spraggon L."/>
            <person name="Squares S.L."/>
            <person name="Steward C.A."/>
            <person name="Sycamore N."/>
            <person name="Tamlyn-Hall G."/>
            <person name="Tester J."/>
            <person name="Theaker A.J."/>
            <person name="Thomas D.W."/>
            <person name="Thorpe A."/>
            <person name="Tracey A."/>
            <person name="Tromans A."/>
            <person name="Tubby B."/>
            <person name="Wall M."/>
            <person name="Wallis J.M."/>
            <person name="West A.P."/>
            <person name="White S.S."/>
            <person name="Whitehead S.L."/>
            <person name="Whittaker H."/>
            <person name="Wild A."/>
            <person name="Willey D.J."/>
            <person name="Wilmer T.E."/>
            <person name="Wood J.M."/>
            <person name="Wray P.W."/>
            <person name="Wyatt J.C."/>
            <person name="Young L."/>
            <person name="Younger R.M."/>
            <person name="Bentley D.R."/>
            <person name="Coulson A."/>
            <person name="Durbin R.M."/>
            <person name="Hubbard T."/>
            <person name="Sulston J.E."/>
            <person name="Dunham I."/>
            <person name="Rogers J."/>
            <person name="Beck S."/>
        </authorList>
    </citation>
    <scope>NUCLEOTIDE SEQUENCE [LARGE SCALE GENOMIC DNA]</scope>
</reference>
<reference key="5">
    <citation type="submission" date="2005-09" db="EMBL/GenBank/DDBJ databases">
        <authorList>
            <person name="Mural R.J."/>
            <person name="Istrail S."/>
            <person name="Sutton G.G."/>
            <person name="Florea L."/>
            <person name="Halpern A.L."/>
            <person name="Mobarry C.M."/>
            <person name="Lippert R."/>
            <person name="Walenz B."/>
            <person name="Shatkay H."/>
            <person name="Dew I."/>
            <person name="Miller J.R."/>
            <person name="Flanigan M.J."/>
            <person name="Edwards N.J."/>
            <person name="Bolanos R."/>
            <person name="Fasulo D."/>
            <person name="Halldorsson B.V."/>
            <person name="Hannenhalli S."/>
            <person name="Turner R."/>
            <person name="Yooseph S."/>
            <person name="Lu F."/>
            <person name="Nusskern D.R."/>
            <person name="Shue B.C."/>
            <person name="Zheng X.H."/>
            <person name="Zhong F."/>
            <person name="Delcher A.L."/>
            <person name="Huson D.H."/>
            <person name="Kravitz S.A."/>
            <person name="Mouchard L."/>
            <person name="Reinert K."/>
            <person name="Remington K.A."/>
            <person name="Clark A.G."/>
            <person name="Waterman M.S."/>
            <person name="Eichler E.E."/>
            <person name="Adams M.D."/>
            <person name="Hunkapiller M.W."/>
            <person name="Myers E.W."/>
            <person name="Venter J.C."/>
        </authorList>
    </citation>
    <scope>NUCLEOTIDE SEQUENCE [LARGE SCALE GENOMIC DNA]</scope>
</reference>
<reference key="6">
    <citation type="journal article" date="2004" name="Genome Res.">
        <title>The status, quality, and expansion of the NIH full-length cDNA project: the Mammalian Gene Collection (MGC).</title>
        <authorList>
            <consortium name="The MGC Project Team"/>
        </authorList>
    </citation>
    <scope>NUCLEOTIDE SEQUENCE [LARGE SCALE MRNA] (ISOFORMS 1 AND 2)</scope>
    <scope>VARIANT HIS-157</scope>
    <source>
        <tissue>Cerebellum</tissue>
    </source>
</reference>
<reference key="7">
    <citation type="journal article" date="2002" name="Mol. Cell. Biol.">
        <title>Regulation of MTK1/MEKK4 kinase activity by its N-terminal autoinhibitory domain and GADD45 binding.</title>
        <authorList>
            <person name="Mita H."/>
            <person name="Tsutsui J."/>
            <person name="Takekawa M."/>
            <person name="Witten E.A."/>
            <person name="Saito H."/>
        </authorList>
    </citation>
    <scope>FUNCTION</scope>
    <scope>ACTIVITY REGULATION</scope>
    <scope>INTERACTION WITH GADD45 AND MAP2K6</scope>
    <scope>MUTAGENESIS OF LYS-1372</scope>
</reference>
<reference key="8">
    <citation type="journal article" date="2004" name="J. Biol. Chem.">
        <title>The DIX domain protein coiled-coil-DIX1 inhibits c-Jun N-terminal kinase activation by Axin and dishevelled through distinct mechanisms.</title>
        <authorList>
            <person name="Wong C.K."/>
            <person name="Luo W."/>
            <person name="Deng Y."/>
            <person name="Zou H."/>
            <person name="Ye Z."/>
            <person name="Lin S.-C."/>
        </authorList>
    </citation>
    <scope>INTERACTION WITH AXIN1 AND DIXDC1</scope>
</reference>
<reference key="9">
    <citation type="journal article" date="2005" name="J. Biol. Chem.">
        <title>MEKK4 is an effector of the embryonic TRAF4 for JNK activation.</title>
        <authorList>
            <person name="Abell A.N."/>
            <person name="Johnson G.L."/>
        </authorList>
    </citation>
    <scope>INTERACTION WITH TRAF4</scope>
</reference>
<reference key="10">
    <citation type="journal article" date="2009" name="Anal. Chem.">
        <title>Lys-N and trypsin cover complementary parts of the phosphoproteome in a refined SCX-based approach.</title>
        <authorList>
            <person name="Gauci S."/>
            <person name="Helbig A.O."/>
            <person name="Slijper M."/>
            <person name="Krijgsveld J."/>
            <person name="Heck A.J."/>
            <person name="Mohammed S."/>
        </authorList>
    </citation>
    <scope>IDENTIFICATION BY MASS SPECTROMETRY [LARGE SCALE ANALYSIS]</scope>
</reference>
<reference key="11">
    <citation type="journal article" date="2009" name="Mol. Cell. Proteomics">
        <title>Large-scale proteomics analysis of the human kinome.</title>
        <authorList>
            <person name="Oppermann F.S."/>
            <person name="Gnad F."/>
            <person name="Olsen J.V."/>
            <person name="Hornberger R."/>
            <person name="Greff Z."/>
            <person name="Keri G."/>
            <person name="Mann M."/>
            <person name="Daub H."/>
        </authorList>
    </citation>
    <scope>PHOSPHORYLATION [LARGE SCALE ANALYSIS] AT SER-499</scope>
    <scope>IDENTIFICATION BY MASS SPECTROMETRY [LARGE SCALE ANALYSIS]</scope>
</reference>
<reference key="12">
    <citation type="journal article" date="2009" name="Sci. Signal.">
        <title>Quantitative phosphoproteomic analysis of T cell receptor signaling reveals system-wide modulation of protein-protein interactions.</title>
        <authorList>
            <person name="Mayya V."/>
            <person name="Lundgren D.H."/>
            <person name="Hwang S.-I."/>
            <person name="Rezaul K."/>
            <person name="Wu L."/>
            <person name="Eng J.K."/>
            <person name="Rodionov V."/>
            <person name="Han D.K."/>
        </authorList>
    </citation>
    <scope>IDENTIFICATION BY MASS SPECTROMETRY [LARGE SCALE ANALYSIS]</scope>
    <source>
        <tissue>Leukemic T-cell</tissue>
    </source>
</reference>
<reference key="13">
    <citation type="journal article" date="2010" name="PLoS ONE">
        <title>Phosphorylation of human tristetraprolin in response to its interaction with the Cbl interacting protein CIN85.</title>
        <authorList>
            <person name="Kedar V.P."/>
            <person name="Darby M.K."/>
            <person name="Williams J.G."/>
            <person name="Blackshear P.J."/>
        </authorList>
    </citation>
    <scope>INTERACTION WITH SH3KBP1 AND ZFP36</scope>
</reference>
<reference key="14">
    <citation type="journal article" date="2011" name="BMC Syst. Biol.">
        <title>Initial characterization of the human central proteome.</title>
        <authorList>
            <person name="Burkard T.R."/>
            <person name="Planyavsky M."/>
            <person name="Kaupe I."/>
            <person name="Breitwieser F.P."/>
            <person name="Buerckstuemmer T."/>
            <person name="Bennett K.L."/>
            <person name="Superti-Furga G."/>
            <person name="Colinge J."/>
        </authorList>
    </citation>
    <scope>IDENTIFICATION BY MASS SPECTROMETRY [LARGE SCALE ANALYSIS]</scope>
</reference>
<reference key="15">
    <citation type="journal article" date="2011" name="Sci. Signal.">
        <title>System-wide temporal characterization of the proteome and phosphoproteome of human embryonic stem cell differentiation.</title>
        <authorList>
            <person name="Rigbolt K.T."/>
            <person name="Prokhorova T.A."/>
            <person name="Akimov V."/>
            <person name="Henningsen J."/>
            <person name="Johansen P.T."/>
            <person name="Kratchmarova I."/>
            <person name="Kassem M."/>
            <person name="Mann M."/>
            <person name="Olsen J.V."/>
            <person name="Blagoev B."/>
        </authorList>
    </citation>
    <scope>PHOSPHORYLATION [LARGE SCALE ANALYSIS] AT SER-456; SER-457; THR-458 AND SER-461</scope>
    <scope>IDENTIFICATION BY MASS SPECTROMETRY [LARGE SCALE ANALYSIS]</scope>
</reference>
<reference key="16">
    <citation type="journal article" date="2013" name="J. Proteome Res.">
        <title>Toward a comprehensive characterization of a human cancer cell phosphoproteome.</title>
        <authorList>
            <person name="Zhou H."/>
            <person name="Di Palma S."/>
            <person name="Preisinger C."/>
            <person name="Peng M."/>
            <person name="Polat A.N."/>
            <person name="Heck A.J."/>
            <person name="Mohammed S."/>
        </authorList>
    </citation>
    <scope>PHOSPHORYLATION [LARGE SCALE ANALYSIS] AT SER-431; THR-447; SER-481; SER-499; SER-1252 AND SER-1274</scope>
    <scope>IDENTIFICATION BY MASS SPECTROMETRY [LARGE SCALE ANALYSIS]</scope>
    <source>
        <tissue>Cervix carcinoma</tissue>
        <tissue>Erythroleukemia</tissue>
    </source>
</reference>
<reference key="17">
    <citation type="journal article" date="2007" name="Nature">
        <title>Patterns of somatic mutation in human cancer genomes.</title>
        <authorList>
            <person name="Greenman C."/>
            <person name="Stephens P."/>
            <person name="Smith R."/>
            <person name="Dalgliesh G.L."/>
            <person name="Hunter C."/>
            <person name="Bignell G."/>
            <person name="Davies H."/>
            <person name="Teague J."/>
            <person name="Butler A."/>
            <person name="Stevens C."/>
            <person name="Edkins S."/>
            <person name="O'Meara S."/>
            <person name="Vastrik I."/>
            <person name="Schmidt E.E."/>
            <person name="Avis T."/>
            <person name="Barthorpe S."/>
            <person name="Bhamra G."/>
            <person name="Buck G."/>
            <person name="Choudhury B."/>
            <person name="Clements J."/>
            <person name="Cole J."/>
            <person name="Dicks E."/>
            <person name="Forbes S."/>
            <person name="Gray K."/>
            <person name="Halliday K."/>
            <person name="Harrison R."/>
            <person name="Hills K."/>
            <person name="Hinton J."/>
            <person name="Jenkinson A."/>
            <person name="Jones D."/>
            <person name="Menzies A."/>
            <person name="Mironenko T."/>
            <person name="Perry J."/>
            <person name="Raine K."/>
            <person name="Richardson D."/>
            <person name="Shepherd R."/>
            <person name="Small A."/>
            <person name="Tofts C."/>
            <person name="Varian J."/>
            <person name="Webb T."/>
            <person name="West S."/>
            <person name="Widaa S."/>
            <person name="Yates A."/>
            <person name="Cahill D.P."/>
            <person name="Louis D.N."/>
            <person name="Goldstraw P."/>
            <person name="Nicholson A.G."/>
            <person name="Brasseur F."/>
            <person name="Looijenga L."/>
            <person name="Weber B.L."/>
            <person name="Chiew Y.-E."/>
            <person name="DeFazio A."/>
            <person name="Greaves M.F."/>
            <person name="Green A.R."/>
            <person name="Campbell P."/>
            <person name="Birney E."/>
            <person name="Easton D.F."/>
            <person name="Chenevix-Trench G."/>
            <person name="Tan M.-H."/>
            <person name="Khoo S.K."/>
            <person name="Teh B.T."/>
            <person name="Yuen S.T."/>
            <person name="Leung S.Y."/>
            <person name="Wooster R."/>
            <person name="Futreal P.A."/>
            <person name="Stratton M.R."/>
        </authorList>
    </citation>
    <scope>VARIANTS [LARGE SCALE ANALYSIS] THR-294; ILE-335; HIS-566; HIS-584; PRO-906; GLN-1413 AND VAL-1492</scope>
</reference>